<feature type="signal peptide" evidence="4">
    <location>
        <begin position="1"/>
        <end position="21"/>
    </location>
</feature>
<feature type="chain" id="PRO_5000220000" description="Probable mannan endo-1,4-beta-mannosidase A">
    <location>
        <begin position="22"/>
        <end position="383"/>
    </location>
</feature>
<feature type="active site" description="Proton donor" evidence="3">
    <location>
        <position position="206"/>
    </location>
</feature>
<feature type="active site" description="Nucleophile" evidence="3">
    <location>
        <position position="314"/>
    </location>
</feature>
<feature type="binding site" evidence="2">
    <location>
        <position position="92"/>
    </location>
    <ligand>
        <name>substrate</name>
    </ligand>
</feature>
<feature type="binding site" evidence="2">
    <location>
        <position position="205"/>
    </location>
    <ligand>
        <name>substrate</name>
    </ligand>
</feature>
<feature type="binding site" evidence="2">
    <location>
        <position position="281"/>
    </location>
    <ligand>
        <name>substrate</name>
    </ligand>
</feature>
<feature type="binding site" evidence="2">
    <location>
        <position position="344"/>
    </location>
    <ligand>
        <name>substrate</name>
    </ligand>
</feature>
<feature type="glycosylation site" description="N-linked (GlcNAc...) asparagine" evidence="4">
    <location>
        <position position="17"/>
    </location>
</feature>
<feature type="glycosylation site" description="N-linked (GlcNAc...) asparagine" evidence="4">
    <location>
        <position position="194"/>
    </location>
</feature>
<feature type="glycosylation site" description="N-linked (GlcNAc...) asparagine" evidence="4">
    <location>
        <position position="263"/>
    </location>
</feature>
<feature type="strand" evidence="6">
    <location>
        <begin position="42"/>
        <end position="44"/>
    </location>
</feature>
<feature type="strand" evidence="6">
    <location>
        <begin position="47"/>
        <end position="50"/>
    </location>
</feature>
<feature type="strand" evidence="6">
    <location>
        <begin position="53"/>
        <end position="55"/>
    </location>
</feature>
<feature type="strand" evidence="6">
    <location>
        <begin position="57"/>
        <end position="61"/>
    </location>
</feature>
<feature type="helix" evidence="6">
    <location>
        <begin position="65"/>
        <end position="67"/>
    </location>
</feature>
<feature type="helix" evidence="6">
    <location>
        <begin position="71"/>
        <end position="84"/>
    </location>
</feature>
<feature type="strand" evidence="6">
    <location>
        <begin position="88"/>
        <end position="92"/>
    </location>
</feature>
<feature type="strand" evidence="6">
    <location>
        <begin position="96"/>
        <end position="99"/>
    </location>
</feature>
<feature type="strand" evidence="6">
    <location>
        <begin position="108"/>
        <end position="112"/>
    </location>
</feature>
<feature type="strand" evidence="6">
    <location>
        <begin position="115"/>
        <end position="118"/>
    </location>
</feature>
<feature type="turn" evidence="6">
    <location>
        <begin position="122"/>
        <end position="124"/>
    </location>
</feature>
<feature type="helix" evidence="6">
    <location>
        <begin position="125"/>
        <end position="137"/>
    </location>
</feature>
<feature type="strand" evidence="6">
    <location>
        <begin position="141"/>
        <end position="146"/>
    </location>
</feature>
<feature type="strand" evidence="6">
    <location>
        <begin position="148"/>
        <end position="151"/>
    </location>
</feature>
<feature type="helix" evidence="6">
    <location>
        <begin position="155"/>
        <end position="163"/>
    </location>
</feature>
<feature type="helix" evidence="6">
    <location>
        <begin position="169"/>
        <end position="173"/>
    </location>
</feature>
<feature type="helix" evidence="6">
    <location>
        <begin position="175"/>
        <end position="191"/>
    </location>
</feature>
<feature type="turn" evidence="6">
    <location>
        <begin position="192"/>
        <end position="194"/>
    </location>
</feature>
<feature type="strand" evidence="6">
    <location>
        <begin position="198"/>
        <end position="203"/>
    </location>
</feature>
<feature type="helix" evidence="6">
    <location>
        <begin position="215"/>
        <end position="231"/>
    </location>
</feature>
<feature type="strand" evidence="6">
    <location>
        <begin position="235"/>
        <end position="238"/>
    </location>
</feature>
<feature type="helix" evidence="6">
    <location>
        <begin position="254"/>
        <end position="256"/>
    </location>
</feature>
<feature type="helix" evidence="6">
    <location>
        <begin position="264"/>
        <end position="268"/>
    </location>
</feature>
<feature type="strand" evidence="6">
    <location>
        <begin position="275"/>
        <end position="280"/>
    </location>
</feature>
<feature type="helix" evidence="6">
    <location>
        <begin position="282"/>
        <end position="285"/>
    </location>
</feature>
<feature type="helix" evidence="6">
    <location>
        <begin position="291"/>
        <end position="306"/>
    </location>
</feature>
<feature type="strand" evidence="6">
    <location>
        <begin position="310"/>
        <end position="315"/>
    </location>
</feature>
<feature type="helix" evidence="6">
    <location>
        <begin position="321"/>
        <end position="334"/>
    </location>
</feature>
<feature type="strand" evidence="6">
    <location>
        <begin position="338"/>
        <end position="344"/>
    </location>
</feature>
<feature type="helix" evidence="6">
    <location>
        <begin position="367"/>
        <end position="372"/>
    </location>
</feature>
<feature type="helix" evidence="6">
    <location>
        <begin position="374"/>
        <end position="381"/>
    </location>
</feature>
<accession>A2QKT4</accession>
<proteinExistence type="evidence at protein level"/>
<gene>
    <name type="primary">manA</name>
    <name type="synonym">man1</name>
    <name type="ORF">An05g01320</name>
</gene>
<sequence>MKLSNALLTLASLALANVSTALPKASPAPSTSSSAASTSFASTSGLQFTIDGETGYFAGTNSYWIGFLTDNADVDLVMGHLKSSGLKILRVWGFNDVTSQPSSGTVWYQLHQDGKSTINTGADGLQRLDYVVSSAEQHDIKLIINFVNYWTDYGGMSAYVSAYGGSGETDFYTSDTMQSAYQTYIKTVVERYSNSSAVFAWELANEPRCPSCDTSVLYNWIEKTSKFIKGLDADRMVCIGDEGFGLNIDSDGSYPYQFSEGLNFTMNLGIDTIDFGTLHLYPDSWGTSDDWGNGWITAHGAACKAAGKPCLLEEYGVTSNHCSVEGSWQKTALSTTGVGADLFWQYGDDLSTGKSPDDGNTIYYGTSDYQCLVTDHVAAIGSA</sequence>
<comment type="function">
    <text evidence="1">Endo-1,4-mannanase, a crucial enzyme for depolymerization of seed galactomannans and wood galactoglucomannans.</text>
</comment>
<comment type="catalytic activity">
    <reaction>
        <text>Random hydrolysis of (1-&gt;4)-beta-D-mannosidic linkages in mannans, galactomannans and glucomannans.</text>
        <dbReference type="EC" id="3.2.1.78"/>
    </reaction>
</comment>
<comment type="subcellular location">
    <subcellularLocation>
        <location evidence="1">Secreted</location>
    </subcellularLocation>
</comment>
<comment type="similarity">
    <text evidence="5">Belongs to the glycosyl hydrolase 5 (cellulase A) family.</text>
</comment>
<dbReference type="EC" id="3.2.1.78"/>
<dbReference type="EMBL" id="AM270105">
    <property type="protein sequence ID" value="CAK96471.1"/>
    <property type="molecule type" value="Genomic_DNA"/>
</dbReference>
<dbReference type="RefSeq" id="XP_001390707.1">
    <property type="nucleotide sequence ID" value="XM_001390670.1"/>
</dbReference>
<dbReference type="PDB" id="3WH9">
    <property type="method" value="X-ray"/>
    <property type="resolution" value="1.57 A"/>
    <property type="chains" value="A/B=39-383"/>
</dbReference>
<dbReference type="PDBsum" id="3WH9"/>
<dbReference type="SMR" id="A2QKT4"/>
<dbReference type="CAZy" id="GH5">
    <property type="family name" value="Glycoside Hydrolase Family 5"/>
</dbReference>
<dbReference type="GlyCosmos" id="A2QKT4">
    <property type="glycosylation" value="3 sites, No reported glycans"/>
</dbReference>
<dbReference type="EnsemblFungi" id="CAK96471">
    <property type="protein sequence ID" value="CAK96471"/>
    <property type="gene ID" value="An05g01320"/>
</dbReference>
<dbReference type="GeneID" id="4980871"/>
<dbReference type="KEGG" id="ang:An05g01320"/>
<dbReference type="VEuPathDB" id="FungiDB:An05g01320"/>
<dbReference type="HOGENOM" id="CLU_031603_4_1_1"/>
<dbReference type="BRENDA" id="3.2.1.78">
    <property type="organism ID" value="518"/>
</dbReference>
<dbReference type="EvolutionaryTrace" id="A2QKT4"/>
<dbReference type="Proteomes" id="UP000006706">
    <property type="component" value="Chromosome 7L"/>
</dbReference>
<dbReference type="GO" id="GO:0005576">
    <property type="term" value="C:extracellular region"/>
    <property type="evidence" value="ECO:0000314"/>
    <property type="project" value="AspGD"/>
</dbReference>
<dbReference type="GO" id="GO:0016985">
    <property type="term" value="F:mannan endo-1,4-beta-mannosidase activity"/>
    <property type="evidence" value="ECO:0000314"/>
    <property type="project" value="AspGD"/>
</dbReference>
<dbReference type="GO" id="GO:0046355">
    <property type="term" value="P:mannan catabolic process"/>
    <property type="evidence" value="ECO:0000314"/>
    <property type="project" value="AspGD"/>
</dbReference>
<dbReference type="FunFam" id="3.20.20.80:FF:000076">
    <property type="entry name" value="Mannan endo-1,4-beta-mannosidase A"/>
    <property type="match status" value="1"/>
</dbReference>
<dbReference type="Gene3D" id="3.20.20.80">
    <property type="entry name" value="Glycosidases"/>
    <property type="match status" value="1"/>
</dbReference>
<dbReference type="InterPro" id="IPR001547">
    <property type="entry name" value="Glyco_hydro_5"/>
</dbReference>
<dbReference type="InterPro" id="IPR017853">
    <property type="entry name" value="Glycoside_hydrolase_SF"/>
</dbReference>
<dbReference type="InterPro" id="IPR045053">
    <property type="entry name" value="MAN-like"/>
</dbReference>
<dbReference type="PANTHER" id="PTHR31451">
    <property type="match status" value="1"/>
</dbReference>
<dbReference type="PANTHER" id="PTHR31451:SF39">
    <property type="entry name" value="MANNAN ENDO-1,4-BETA-MANNOSIDASE 1"/>
    <property type="match status" value="1"/>
</dbReference>
<dbReference type="Pfam" id="PF00150">
    <property type="entry name" value="Cellulase"/>
    <property type="match status" value="1"/>
</dbReference>
<dbReference type="SUPFAM" id="SSF51445">
    <property type="entry name" value="(Trans)glycosidases"/>
    <property type="match status" value="1"/>
</dbReference>
<organism>
    <name type="scientific">Aspergillus niger (strain ATCC MYA-4892 / CBS 513.88 / FGSC A1513)</name>
    <dbReference type="NCBI Taxonomy" id="425011"/>
    <lineage>
        <taxon>Eukaryota</taxon>
        <taxon>Fungi</taxon>
        <taxon>Dikarya</taxon>
        <taxon>Ascomycota</taxon>
        <taxon>Pezizomycotina</taxon>
        <taxon>Eurotiomycetes</taxon>
        <taxon>Eurotiomycetidae</taxon>
        <taxon>Eurotiales</taxon>
        <taxon>Aspergillaceae</taxon>
        <taxon>Aspergillus</taxon>
        <taxon>Aspergillus subgen. Circumdati</taxon>
    </lineage>
</organism>
<keyword id="KW-0002">3D-structure</keyword>
<keyword id="KW-0119">Carbohydrate metabolism</keyword>
<keyword id="KW-0325">Glycoprotein</keyword>
<keyword id="KW-0326">Glycosidase</keyword>
<keyword id="KW-0378">Hydrolase</keyword>
<keyword id="KW-1185">Reference proteome</keyword>
<keyword id="KW-0964">Secreted</keyword>
<keyword id="KW-0732">Signal</keyword>
<evidence type="ECO:0000250" key="1"/>
<evidence type="ECO:0000250" key="2">
    <source>
        <dbReference type="UniProtKB" id="B4XC07"/>
    </source>
</evidence>
<evidence type="ECO:0000250" key="3">
    <source>
        <dbReference type="UniProtKB" id="Q99036"/>
    </source>
</evidence>
<evidence type="ECO:0000255" key="4"/>
<evidence type="ECO:0000305" key="5"/>
<evidence type="ECO:0007829" key="6">
    <source>
        <dbReference type="PDB" id="3WH9"/>
    </source>
</evidence>
<reference key="1">
    <citation type="journal article" date="2007" name="Nat. Biotechnol.">
        <title>Genome sequencing and analysis of the versatile cell factory Aspergillus niger CBS 513.88.</title>
        <authorList>
            <person name="Pel H.J."/>
            <person name="de Winde J.H."/>
            <person name="Archer D.B."/>
            <person name="Dyer P.S."/>
            <person name="Hofmann G."/>
            <person name="Schaap P.J."/>
            <person name="Turner G."/>
            <person name="de Vries R.P."/>
            <person name="Albang R."/>
            <person name="Albermann K."/>
            <person name="Andersen M.R."/>
            <person name="Bendtsen J.D."/>
            <person name="Benen J.A.E."/>
            <person name="van den Berg M."/>
            <person name="Breestraat S."/>
            <person name="Caddick M.X."/>
            <person name="Contreras R."/>
            <person name="Cornell M."/>
            <person name="Coutinho P.M."/>
            <person name="Danchin E.G.J."/>
            <person name="Debets A.J.M."/>
            <person name="Dekker P."/>
            <person name="van Dijck P.W.M."/>
            <person name="van Dijk A."/>
            <person name="Dijkhuizen L."/>
            <person name="Driessen A.J.M."/>
            <person name="d'Enfert C."/>
            <person name="Geysens S."/>
            <person name="Goosen C."/>
            <person name="Groot G.S.P."/>
            <person name="de Groot P.W.J."/>
            <person name="Guillemette T."/>
            <person name="Henrissat B."/>
            <person name="Herweijer M."/>
            <person name="van den Hombergh J.P.T.W."/>
            <person name="van den Hondel C.A.M.J.J."/>
            <person name="van der Heijden R.T.J.M."/>
            <person name="van der Kaaij R.M."/>
            <person name="Klis F.M."/>
            <person name="Kools H.J."/>
            <person name="Kubicek C.P."/>
            <person name="van Kuyk P.A."/>
            <person name="Lauber J."/>
            <person name="Lu X."/>
            <person name="van der Maarel M.J.E.C."/>
            <person name="Meulenberg R."/>
            <person name="Menke H."/>
            <person name="Mortimer M.A."/>
            <person name="Nielsen J."/>
            <person name="Oliver S.G."/>
            <person name="Olsthoorn M."/>
            <person name="Pal K."/>
            <person name="van Peij N.N.M.E."/>
            <person name="Ram A.F.J."/>
            <person name="Rinas U."/>
            <person name="Roubos J.A."/>
            <person name="Sagt C.M.J."/>
            <person name="Schmoll M."/>
            <person name="Sun J."/>
            <person name="Ussery D."/>
            <person name="Varga J."/>
            <person name="Vervecken W."/>
            <person name="van de Vondervoort P.J.J."/>
            <person name="Wedler H."/>
            <person name="Woesten H.A.B."/>
            <person name="Zeng A.-P."/>
            <person name="van Ooyen A.J.J."/>
            <person name="Visser J."/>
            <person name="Stam H."/>
        </authorList>
    </citation>
    <scope>NUCLEOTIDE SEQUENCE [LARGE SCALE GENOMIC DNA]</scope>
    <source>
        <strain>ATCC MYA-4892 / CBS 513.88 / FGSC A1513</strain>
    </source>
</reference>
<name>MANA_ASPNC</name>
<protein>
    <recommendedName>
        <fullName>Probable mannan endo-1,4-beta-mannosidase A</fullName>
        <ecNumber>3.2.1.78</ecNumber>
    </recommendedName>
    <alternativeName>
        <fullName>Endo-beta-1,4-mannanase A</fullName>
    </alternativeName>
</protein>